<name>NIKR_METKA</name>
<reference key="1">
    <citation type="journal article" date="2002" name="Proc. Natl. Acad. Sci. U.S.A.">
        <title>The complete genome of hyperthermophile Methanopyrus kandleri AV19 and monophyly of archaeal methanogens.</title>
        <authorList>
            <person name="Slesarev A.I."/>
            <person name="Mezhevaya K.V."/>
            <person name="Makarova K.S."/>
            <person name="Polushin N.N."/>
            <person name="Shcherbinina O.V."/>
            <person name="Shakhova V.V."/>
            <person name="Belova G.I."/>
            <person name="Aravind L."/>
            <person name="Natale D.A."/>
            <person name="Rogozin I.B."/>
            <person name="Tatusov R.L."/>
            <person name="Wolf Y.I."/>
            <person name="Stetter K.O."/>
            <person name="Malykh A.G."/>
            <person name="Koonin E.V."/>
            <person name="Kozyavkin S.A."/>
        </authorList>
    </citation>
    <scope>NUCLEOTIDE SEQUENCE [LARGE SCALE GENOMIC DNA]</scope>
    <source>
        <strain>AV19 / DSM 6324 / JCM 9639 / NBRC 100938</strain>
    </source>
</reference>
<organism>
    <name type="scientific">Methanopyrus kandleri (strain AV19 / DSM 6324 / JCM 9639 / NBRC 100938)</name>
    <dbReference type="NCBI Taxonomy" id="190192"/>
    <lineage>
        <taxon>Archaea</taxon>
        <taxon>Methanobacteriati</taxon>
        <taxon>Methanobacteriota</taxon>
        <taxon>Methanomada group</taxon>
        <taxon>Methanopyri</taxon>
        <taxon>Methanopyrales</taxon>
        <taxon>Methanopyraceae</taxon>
        <taxon>Methanopyrus</taxon>
    </lineage>
</organism>
<keyword id="KW-0238">DNA-binding</keyword>
<keyword id="KW-0479">Metal-binding</keyword>
<keyword id="KW-0533">Nickel</keyword>
<keyword id="KW-1185">Reference proteome</keyword>
<keyword id="KW-0804">Transcription</keyword>
<keyword id="KW-0805">Transcription regulation</keyword>
<accession>Q8TV90</accession>
<gene>
    <name type="ordered locus">MK1502</name>
</gene>
<dbReference type="EMBL" id="AE009439">
    <property type="protein sequence ID" value="AAM02715.1"/>
    <property type="molecule type" value="Genomic_DNA"/>
</dbReference>
<dbReference type="RefSeq" id="WP_011019870.1">
    <property type="nucleotide sequence ID" value="NC_003551.1"/>
</dbReference>
<dbReference type="SMR" id="Q8TV90"/>
<dbReference type="FunCoup" id="Q8TV90">
    <property type="interactions" value="1"/>
</dbReference>
<dbReference type="STRING" id="190192.MK1502"/>
<dbReference type="PaxDb" id="190192-MK1502"/>
<dbReference type="EnsemblBacteria" id="AAM02715">
    <property type="protein sequence ID" value="AAM02715"/>
    <property type="gene ID" value="MK1502"/>
</dbReference>
<dbReference type="GeneID" id="1478097"/>
<dbReference type="KEGG" id="mka:MK1502"/>
<dbReference type="HOGENOM" id="CLU_113319_1_2_2"/>
<dbReference type="InParanoid" id="Q8TV90"/>
<dbReference type="OrthoDB" id="25654at2157"/>
<dbReference type="Proteomes" id="UP000001826">
    <property type="component" value="Chromosome"/>
</dbReference>
<dbReference type="GO" id="GO:0003677">
    <property type="term" value="F:DNA binding"/>
    <property type="evidence" value="ECO:0007669"/>
    <property type="project" value="UniProtKB-KW"/>
</dbReference>
<dbReference type="GO" id="GO:0003700">
    <property type="term" value="F:DNA-binding transcription factor activity"/>
    <property type="evidence" value="ECO:0007669"/>
    <property type="project" value="UniProtKB-UniRule"/>
</dbReference>
<dbReference type="GO" id="GO:0016151">
    <property type="term" value="F:nickel cation binding"/>
    <property type="evidence" value="ECO:0007669"/>
    <property type="project" value="UniProtKB-UniRule"/>
</dbReference>
<dbReference type="GO" id="GO:0010045">
    <property type="term" value="P:response to nickel cation"/>
    <property type="evidence" value="ECO:0007669"/>
    <property type="project" value="InterPro"/>
</dbReference>
<dbReference type="CDD" id="cd22231">
    <property type="entry name" value="RHH_NikR_HicB-like"/>
    <property type="match status" value="1"/>
</dbReference>
<dbReference type="Gene3D" id="3.30.70.1150">
    <property type="entry name" value="ACT-like. Chain A, domain 2"/>
    <property type="match status" value="1"/>
</dbReference>
<dbReference type="Gene3D" id="1.10.1220.10">
    <property type="entry name" value="Met repressor-like"/>
    <property type="match status" value="1"/>
</dbReference>
<dbReference type="HAMAP" id="MF_00476">
    <property type="entry name" value="NikR"/>
    <property type="match status" value="1"/>
</dbReference>
<dbReference type="InterPro" id="IPR027271">
    <property type="entry name" value="Acetolactate_synth/TF_NikR_C"/>
</dbReference>
<dbReference type="InterPro" id="IPR045865">
    <property type="entry name" value="ACT-like_dom_sf"/>
</dbReference>
<dbReference type="InterPro" id="IPR013321">
    <property type="entry name" value="Arc_rbn_hlx_hlx"/>
</dbReference>
<dbReference type="InterPro" id="IPR002145">
    <property type="entry name" value="CopG"/>
</dbReference>
<dbReference type="InterPro" id="IPR050192">
    <property type="entry name" value="CopG/NikR_regulator"/>
</dbReference>
<dbReference type="InterPro" id="IPR022988">
    <property type="entry name" value="Ni_resp_reg_NikR"/>
</dbReference>
<dbReference type="InterPro" id="IPR010985">
    <property type="entry name" value="Ribbon_hlx_hlx"/>
</dbReference>
<dbReference type="InterPro" id="IPR014864">
    <property type="entry name" value="TF_NikR_Ni-bd_C"/>
</dbReference>
<dbReference type="NCBIfam" id="NF002169">
    <property type="entry name" value="PRK01002.1"/>
    <property type="match status" value="1"/>
</dbReference>
<dbReference type="NCBIfam" id="NF002815">
    <property type="entry name" value="PRK02967.1"/>
    <property type="match status" value="1"/>
</dbReference>
<dbReference type="NCBIfam" id="NF003381">
    <property type="entry name" value="PRK04460.1"/>
    <property type="match status" value="1"/>
</dbReference>
<dbReference type="PANTHER" id="PTHR34719">
    <property type="entry name" value="NICKEL-RESPONSIVE REGULATOR"/>
    <property type="match status" value="1"/>
</dbReference>
<dbReference type="PANTHER" id="PTHR34719:SF2">
    <property type="entry name" value="NICKEL-RESPONSIVE REGULATOR"/>
    <property type="match status" value="1"/>
</dbReference>
<dbReference type="Pfam" id="PF08753">
    <property type="entry name" value="NikR_C"/>
    <property type="match status" value="1"/>
</dbReference>
<dbReference type="Pfam" id="PF01402">
    <property type="entry name" value="RHH_1"/>
    <property type="match status" value="1"/>
</dbReference>
<dbReference type="SUPFAM" id="SSF55021">
    <property type="entry name" value="ACT-like"/>
    <property type="match status" value="1"/>
</dbReference>
<dbReference type="SUPFAM" id="SSF47598">
    <property type="entry name" value="Ribbon-helix-helix"/>
    <property type="match status" value="1"/>
</dbReference>
<feature type="chain" id="PRO_0000139303" description="Putative nickel-responsive regulator">
    <location>
        <begin position="1"/>
        <end position="141"/>
    </location>
</feature>
<feature type="binding site" evidence="1">
    <location>
        <position position="83"/>
    </location>
    <ligand>
        <name>Ni(2+)</name>
        <dbReference type="ChEBI" id="CHEBI:49786"/>
    </ligand>
</feature>
<feature type="binding site" evidence="1">
    <location>
        <position position="94"/>
    </location>
    <ligand>
        <name>Ni(2+)</name>
        <dbReference type="ChEBI" id="CHEBI:49786"/>
    </ligand>
</feature>
<feature type="binding site" evidence="1">
    <location>
        <position position="96"/>
    </location>
    <ligand>
        <name>Ni(2+)</name>
        <dbReference type="ChEBI" id="CHEBI:49786"/>
    </ligand>
</feature>
<feature type="binding site" evidence="1">
    <location>
        <position position="102"/>
    </location>
    <ligand>
        <name>Ni(2+)</name>
        <dbReference type="ChEBI" id="CHEBI:49786"/>
    </ligand>
</feature>
<sequence>MNKGEDNLVRTSITVPEQLLQKVNELIASGYFASRSEIFRQALREYLQRIEWTERVGDEEYFGALTYVFQHERAEPELVKVQHEFTDVIISTTHIHVSPEKCLEVLLLQGPGKRIAELAKRIRGVRGVEQAKLTVVSSEGE</sequence>
<protein>
    <recommendedName>
        <fullName evidence="1">Putative nickel-responsive regulator</fullName>
    </recommendedName>
</protein>
<comment type="function">
    <text evidence="1">Transcriptional regulator.</text>
</comment>
<comment type="cofactor">
    <cofactor evidence="1">
        <name>Ni(2+)</name>
        <dbReference type="ChEBI" id="CHEBI:49786"/>
    </cofactor>
    <text evidence="1">Binds 1 nickel ion per subunit.</text>
</comment>
<comment type="similarity">
    <text evidence="1">Belongs to the transcriptional regulatory CopG/NikR family.</text>
</comment>
<evidence type="ECO:0000255" key="1">
    <source>
        <dbReference type="HAMAP-Rule" id="MF_00476"/>
    </source>
</evidence>
<proteinExistence type="inferred from homology"/>